<keyword id="KW-0472">Membrane</keyword>
<keyword id="KW-1185">Reference proteome</keyword>
<keyword id="KW-0677">Repeat</keyword>
<keyword id="KW-0812">Transmembrane</keyword>
<keyword id="KW-1133">Transmembrane helix</keyword>
<reference key="1">
    <citation type="journal article" date="1999" name="Nature">
        <title>Sequence and analysis of chromosome 4 of the plant Arabidopsis thaliana.</title>
        <authorList>
            <person name="Mayer K.F.X."/>
            <person name="Schueller C."/>
            <person name="Wambutt R."/>
            <person name="Murphy G."/>
            <person name="Volckaert G."/>
            <person name="Pohl T."/>
            <person name="Duesterhoeft A."/>
            <person name="Stiekema W."/>
            <person name="Entian K.-D."/>
            <person name="Terryn N."/>
            <person name="Harris B."/>
            <person name="Ansorge W."/>
            <person name="Brandt P."/>
            <person name="Grivell L.A."/>
            <person name="Rieger M."/>
            <person name="Weichselgartner M."/>
            <person name="de Simone V."/>
            <person name="Obermaier B."/>
            <person name="Mache R."/>
            <person name="Mueller M."/>
            <person name="Kreis M."/>
            <person name="Delseny M."/>
            <person name="Puigdomenech P."/>
            <person name="Watson M."/>
            <person name="Schmidtheini T."/>
            <person name="Reichert B."/>
            <person name="Portetelle D."/>
            <person name="Perez-Alonso M."/>
            <person name="Boutry M."/>
            <person name="Bancroft I."/>
            <person name="Vos P."/>
            <person name="Hoheisel J."/>
            <person name="Zimmermann W."/>
            <person name="Wedler H."/>
            <person name="Ridley P."/>
            <person name="Langham S.-A."/>
            <person name="McCullagh B."/>
            <person name="Bilham L."/>
            <person name="Robben J."/>
            <person name="van der Schueren J."/>
            <person name="Grymonprez B."/>
            <person name="Chuang Y.-J."/>
            <person name="Vandenbussche F."/>
            <person name="Braeken M."/>
            <person name="Weltjens I."/>
            <person name="Voet M."/>
            <person name="Bastiaens I."/>
            <person name="Aert R."/>
            <person name="Defoor E."/>
            <person name="Weitzenegger T."/>
            <person name="Bothe G."/>
            <person name="Ramsperger U."/>
            <person name="Hilbert H."/>
            <person name="Braun M."/>
            <person name="Holzer E."/>
            <person name="Brandt A."/>
            <person name="Peters S."/>
            <person name="van Staveren M."/>
            <person name="Dirkse W."/>
            <person name="Mooijman P."/>
            <person name="Klein Lankhorst R."/>
            <person name="Rose M."/>
            <person name="Hauf J."/>
            <person name="Koetter P."/>
            <person name="Berneiser S."/>
            <person name="Hempel S."/>
            <person name="Feldpausch M."/>
            <person name="Lamberth S."/>
            <person name="Van den Daele H."/>
            <person name="De Keyser A."/>
            <person name="Buysshaert C."/>
            <person name="Gielen J."/>
            <person name="Villarroel R."/>
            <person name="De Clercq R."/>
            <person name="van Montagu M."/>
            <person name="Rogers J."/>
            <person name="Cronin A."/>
            <person name="Quail M.A."/>
            <person name="Bray-Allen S."/>
            <person name="Clark L."/>
            <person name="Doggett J."/>
            <person name="Hall S."/>
            <person name="Kay M."/>
            <person name="Lennard N."/>
            <person name="McLay K."/>
            <person name="Mayes R."/>
            <person name="Pettett A."/>
            <person name="Rajandream M.A."/>
            <person name="Lyne M."/>
            <person name="Benes V."/>
            <person name="Rechmann S."/>
            <person name="Borkova D."/>
            <person name="Bloecker H."/>
            <person name="Scharfe M."/>
            <person name="Grimm M."/>
            <person name="Loehnert T.-H."/>
            <person name="Dose S."/>
            <person name="de Haan M."/>
            <person name="Maarse A.C."/>
            <person name="Schaefer M."/>
            <person name="Mueller-Auer S."/>
            <person name="Gabel C."/>
            <person name="Fuchs M."/>
            <person name="Fartmann B."/>
            <person name="Granderath K."/>
            <person name="Dauner D."/>
            <person name="Herzl A."/>
            <person name="Neumann S."/>
            <person name="Argiriou A."/>
            <person name="Vitale D."/>
            <person name="Liguori R."/>
            <person name="Piravandi E."/>
            <person name="Massenet O."/>
            <person name="Quigley F."/>
            <person name="Clabauld G."/>
            <person name="Muendlein A."/>
            <person name="Felber R."/>
            <person name="Schnabl S."/>
            <person name="Hiller R."/>
            <person name="Schmidt W."/>
            <person name="Lecharny A."/>
            <person name="Aubourg S."/>
            <person name="Chefdor F."/>
            <person name="Cooke R."/>
            <person name="Berger C."/>
            <person name="Monfort A."/>
            <person name="Casacuberta E."/>
            <person name="Gibbons T."/>
            <person name="Weber N."/>
            <person name="Vandenbol M."/>
            <person name="Bargues M."/>
            <person name="Terol J."/>
            <person name="Torres A."/>
            <person name="Perez-Perez A."/>
            <person name="Purnelle B."/>
            <person name="Bent E."/>
            <person name="Johnson S."/>
            <person name="Tacon D."/>
            <person name="Jesse T."/>
            <person name="Heijnen L."/>
            <person name="Schwarz S."/>
            <person name="Scholler P."/>
            <person name="Heber S."/>
            <person name="Francs P."/>
            <person name="Bielke C."/>
            <person name="Frishman D."/>
            <person name="Haase D."/>
            <person name="Lemcke K."/>
            <person name="Mewes H.-W."/>
            <person name="Stocker S."/>
            <person name="Zaccaria P."/>
            <person name="Bevan M."/>
            <person name="Wilson R.K."/>
            <person name="de la Bastide M."/>
            <person name="Habermann K."/>
            <person name="Parnell L."/>
            <person name="Dedhia N."/>
            <person name="Gnoj L."/>
            <person name="Schutz K."/>
            <person name="Huang E."/>
            <person name="Spiegel L."/>
            <person name="Sekhon M."/>
            <person name="Murray J."/>
            <person name="Sheet P."/>
            <person name="Cordes M."/>
            <person name="Abu-Threideh J."/>
            <person name="Stoneking T."/>
            <person name="Kalicki J."/>
            <person name="Graves T."/>
            <person name="Harmon G."/>
            <person name="Edwards J."/>
            <person name="Latreille P."/>
            <person name="Courtney L."/>
            <person name="Cloud J."/>
            <person name="Abbott A."/>
            <person name="Scott K."/>
            <person name="Johnson D."/>
            <person name="Minx P."/>
            <person name="Bentley D."/>
            <person name="Fulton B."/>
            <person name="Miller N."/>
            <person name="Greco T."/>
            <person name="Kemp K."/>
            <person name="Kramer J."/>
            <person name="Fulton L."/>
            <person name="Mardis E."/>
            <person name="Dante M."/>
            <person name="Pepin K."/>
            <person name="Hillier L.W."/>
            <person name="Nelson J."/>
            <person name="Spieth J."/>
            <person name="Ryan E."/>
            <person name="Andrews S."/>
            <person name="Geisel C."/>
            <person name="Layman D."/>
            <person name="Du H."/>
            <person name="Ali J."/>
            <person name="Berghoff A."/>
            <person name="Jones K."/>
            <person name="Drone K."/>
            <person name="Cotton M."/>
            <person name="Joshu C."/>
            <person name="Antonoiu B."/>
            <person name="Zidanic M."/>
            <person name="Strong C."/>
            <person name="Sun H."/>
            <person name="Lamar B."/>
            <person name="Yordan C."/>
            <person name="Ma P."/>
            <person name="Zhong J."/>
            <person name="Preston R."/>
            <person name="Vil D."/>
            <person name="Shekher M."/>
            <person name="Matero A."/>
            <person name="Shah R."/>
            <person name="Swaby I.K."/>
            <person name="O'Shaughnessy A."/>
            <person name="Rodriguez M."/>
            <person name="Hoffman J."/>
            <person name="Till S."/>
            <person name="Granat S."/>
            <person name="Shohdy N."/>
            <person name="Hasegawa A."/>
            <person name="Hameed A."/>
            <person name="Lodhi M."/>
            <person name="Johnson A."/>
            <person name="Chen E."/>
            <person name="Marra M.A."/>
            <person name="Martienssen R."/>
            <person name="McCombie W.R."/>
        </authorList>
    </citation>
    <scope>NUCLEOTIDE SEQUENCE [LARGE SCALE GENOMIC DNA]</scope>
    <source>
        <strain>cv. Columbia</strain>
    </source>
</reference>
<reference key="2">
    <citation type="journal article" date="2017" name="Plant J.">
        <title>Araport11: a complete reannotation of the Arabidopsis thaliana reference genome.</title>
        <authorList>
            <person name="Cheng C.Y."/>
            <person name="Krishnakumar V."/>
            <person name="Chan A.P."/>
            <person name="Thibaud-Nissen F."/>
            <person name="Schobel S."/>
            <person name="Town C.D."/>
        </authorList>
    </citation>
    <scope>GENOME REANNOTATION</scope>
    <source>
        <strain>cv. Columbia</strain>
    </source>
</reference>
<reference key="3">
    <citation type="journal article" date="2003" name="Science">
        <title>Empirical analysis of transcriptional activity in the Arabidopsis genome.</title>
        <authorList>
            <person name="Yamada K."/>
            <person name="Lim J."/>
            <person name="Dale J.M."/>
            <person name="Chen H."/>
            <person name="Shinn P."/>
            <person name="Palm C.J."/>
            <person name="Southwick A.M."/>
            <person name="Wu H.C."/>
            <person name="Kim C.J."/>
            <person name="Nguyen M."/>
            <person name="Pham P.K."/>
            <person name="Cheuk R.F."/>
            <person name="Karlin-Newmann G."/>
            <person name="Liu S.X."/>
            <person name="Lam B."/>
            <person name="Sakano H."/>
            <person name="Wu T."/>
            <person name="Yu G."/>
            <person name="Miranda M."/>
            <person name="Quach H.L."/>
            <person name="Tripp M."/>
            <person name="Chang C.H."/>
            <person name="Lee J.M."/>
            <person name="Toriumi M.J."/>
            <person name="Chan M.M."/>
            <person name="Tang C.C."/>
            <person name="Onodera C.S."/>
            <person name="Deng J.M."/>
            <person name="Akiyama K."/>
            <person name="Ansari Y."/>
            <person name="Arakawa T."/>
            <person name="Banh J."/>
            <person name="Banno F."/>
            <person name="Bowser L."/>
            <person name="Brooks S.Y."/>
            <person name="Carninci P."/>
            <person name="Chao Q."/>
            <person name="Choy N."/>
            <person name="Enju A."/>
            <person name="Goldsmith A.D."/>
            <person name="Gurjal M."/>
            <person name="Hansen N.F."/>
            <person name="Hayashizaki Y."/>
            <person name="Johnson-Hopson C."/>
            <person name="Hsuan V.W."/>
            <person name="Iida K."/>
            <person name="Karnes M."/>
            <person name="Khan S."/>
            <person name="Koesema E."/>
            <person name="Ishida J."/>
            <person name="Jiang P.X."/>
            <person name="Jones T."/>
            <person name="Kawai J."/>
            <person name="Kamiya A."/>
            <person name="Meyers C."/>
            <person name="Nakajima M."/>
            <person name="Narusaka M."/>
            <person name="Seki M."/>
            <person name="Sakurai T."/>
            <person name="Satou M."/>
            <person name="Tamse R."/>
            <person name="Vaysberg M."/>
            <person name="Wallender E.K."/>
            <person name="Wong C."/>
            <person name="Yamamura Y."/>
            <person name="Yuan S."/>
            <person name="Shinozaki K."/>
            <person name="Davis R.W."/>
            <person name="Theologis A."/>
            <person name="Ecker J.R."/>
        </authorList>
    </citation>
    <scope>NUCLEOTIDE SEQUENCE [LARGE SCALE MRNA]</scope>
    <source>
        <strain>cv. Columbia</strain>
    </source>
</reference>
<reference key="4">
    <citation type="journal article" date="2009" name="DNA Res.">
        <title>Analysis of multiple occurrences of alternative splicing events in Arabidopsis thaliana using novel sequenced full-length cDNAs.</title>
        <authorList>
            <person name="Iida K."/>
            <person name="Fukami-Kobayashi K."/>
            <person name="Toyoda A."/>
            <person name="Sakaki Y."/>
            <person name="Kobayashi M."/>
            <person name="Seki M."/>
            <person name="Shinozaki K."/>
        </authorList>
    </citation>
    <scope>NUCLEOTIDE SEQUENCE [LARGE SCALE MRNA]</scope>
    <source>
        <strain>cv. Columbia</strain>
        <tissue>Rosette leaf</tissue>
    </source>
</reference>
<sequence>MEISKYKAVLALVMLQFTSAGVALFTKAAFMEGLNPTVFVVYRQAIATLFICPISFISAWRKENKPSLGVRGFWWVALTAVIGVTVNQNAYFKGIDLSSSSMACAMTNLIPAVTFIISIIVGFESIKRRSMKSVAKVIGTGVCVGGAMAMTFLRGPKLLNALLNQDNTAWLLGCFFLLISTFAWSLWLILQVPIASHCPDHLYTSACTCFIATIASFLVALALGNTHLPPWKLDSFLKLSCCIYSGFQLAISFFLQAWIVSQKGPVFSALFNPLSAVIVTFFGALYLKEQTYLGSLLGALAIILGLYIVLWGKSEDYQEESTDLKLENEHNTSSQSDIVSIMIGDKAFRSSELLEPLLM</sequence>
<accession>Q9SUD5</accession>
<evidence type="ECO:0000250" key="1"/>
<evidence type="ECO:0000255" key="2"/>
<evidence type="ECO:0000305" key="3"/>
<name>WTR36_ARATH</name>
<organism>
    <name type="scientific">Arabidopsis thaliana</name>
    <name type="common">Mouse-ear cress</name>
    <dbReference type="NCBI Taxonomy" id="3702"/>
    <lineage>
        <taxon>Eukaryota</taxon>
        <taxon>Viridiplantae</taxon>
        <taxon>Streptophyta</taxon>
        <taxon>Embryophyta</taxon>
        <taxon>Tracheophyta</taxon>
        <taxon>Spermatophyta</taxon>
        <taxon>Magnoliopsida</taxon>
        <taxon>eudicotyledons</taxon>
        <taxon>Gunneridae</taxon>
        <taxon>Pentapetalae</taxon>
        <taxon>rosids</taxon>
        <taxon>malvids</taxon>
        <taxon>Brassicales</taxon>
        <taxon>Brassicaceae</taxon>
        <taxon>Camelineae</taxon>
        <taxon>Arabidopsis</taxon>
    </lineage>
</organism>
<dbReference type="EMBL" id="AL035524">
    <property type="protein sequence ID" value="CAB36773.1"/>
    <property type="molecule type" value="Genomic_DNA"/>
</dbReference>
<dbReference type="EMBL" id="AL161572">
    <property type="protein sequence ID" value="CAB79606.1"/>
    <property type="molecule type" value="Genomic_DNA"/>
</dbReference>
<dbReference type="EMBL" id="CP002687">
    <property type="protein sequence ID" value="AEE85426.1"/>
    <property type="molecule type" value="Genomic_DNA"/>
</dbReference>
<dbReference type="EMBL" id="CP002687">
    <property type="protein sequence ID" value="AEE85427.1"/>
    <property type="molecule type" value="Genomic_DNA"/>
</dbReference>
<dbReference type="EMBL" id="CP002687">
    <property type="protein sequence ID" value="AEE85428.1"/>
    <property type="molecule type" value="Genomic_DNA"/>
</dbReference>
<dbReference type="EMBL" id="CP002687">
    <property type="protein sequence ID" value="AEE85429.1"/>
    <property type="molecule type" value="Genomic_DNA"/>
</dbReference>
<dbReference type="EMBL" id="CP002687">
    <property type="protein sequence ID" value="AEE85430.1"/>
    <property type="molecule type" value="Genomic_DNA"/>
</dbReference>
<dbReference type="EMBL" id="AF370525">
    <property type="protein sequence ID" value="AAK48952.1"/>
    <property type="molecule type" value="mRNA"/>
</dbReference>
<dbReference type="EMBL" id="AY081516">
    <property type="protein sequence ID" value="AAM10078.1"/>
    <property type="molecule type" value="mRNA"/>
</dbReference>
<dbReference type="EMBL" id="AK317378">
    <property type="protein sequence ID" value="BAH20049.1"/>
    <property type="molecule type" value="mRNA"/>
</dbReference>
<dbReference type="PIR" id="T02905">
    <property type="entry name" value="T02905"/>
</dbReference>
<dbReference type="RefSeq" id="NP_001031735.1">
    <property type="nucleotide sequence ID" value="NM_001036658.3"/>
</dbReference>
<dbReference type="RefSeq" id="NP_001031736.1">
    <property type="nucleotide sequence ID" value="NM_001036659.2"/>
</dbReference>
<dbReference type="RefSeq" id="NP_001119071.1">
    <property type="nucleotide sequence ID" value="NM_001125599.1"/>
</dbReference>
<dbReference type="RefSeq" id="NP_194533.1">
    <property type="nucleotide sequence ID" value="NM_118943.6"/>
</dbReference>
<dbReference type="RefSeq" id="NP_974628.1">
    <property type="nucleotide sequence ID" value="NM_202899.2"/>
</dbReference>
<dbReference type="SMR" id="Q9SUD5"/>
<dbReference type="BioGRID" id="14206">
    <property type="interactions" value="5"/>
</dbReference>
<dbReference type="IntAct" id="Q9SUD5">
    <property type="interactions" value="5"/>
</dbReference>
<dbReference type="STRING" id="3702.Q9SUD5"/>
<dbReference type="iPTMnet" id="Q9SUD5"/>
<dbReference type="PaxDb" id="3702-AT4G28040.4"/>
<dbReference type="ProteomicsDB" id="242466"/>
<dbReference type="EnsemblPlants" id="AT4G28040.1">
    <property type="protein sequence ID" value="AT4G28040.1"/>
    <property type="gene ID" value="AT4G28040"/>
</dbReference>
<dbReference type="EnsemblPlants" id="AT4G28040.2">
    <property type="protein sequence ID" value="AT4G28040.2"/>
    <property type="gene ID" value="AT4G28040"/>
</dbReference>
<dbReference type="EnsemblPlants" id="AT4G28040.3">
    <property type="protein sequence ID" value="AT4G28040.3"/>
    <property type="gene ID" value="AT4G28040"/>
</dbReference>
<dbReference type="EnsemblPlants" id="AT4G28040.4">
    <property type="protein sequence ID" value="AT4G28040.4"/>
    <property type="gene ID" value="AT4G28040"/>
</dbReference>
<dbReference type="EnsemblPlants" id="AT4G28040.5">
    <property type="protein sequence ID" value="AT4G28040.5"/>
    <property type="gene ID" value="AT4G28040"/>
</dbReference>
<dbReference type="GeneID" id="828919"/>
<dbReference type="Gramene" id="AT4G28040.1">
    <property type="protein sequence ID" value="AT4G28040.1"/>
    <property type="gene ID" value="AT4G28040"/>
</dbReference>
<dbReference type="Gramene" id="AT4G28040.2">
    <property type="protein sequence ID" value="AT4G28040.2"/>
    <property type="gene ID" value="AT4G28040"/>
</dbReference>
<dbReference type="Gramene" id="AT4G28040.3">
    <property type="protein sequence ID" value="AT4G28040.3"/>
    <property type="gene ID" value="AT4G28040"/>
</dbReference>
<dbReference type="Gramene" id="AT4G28040.4">
    <property type="protein sequence ID" value="AT4G28040.4"/>
    <property type="gene ID" value="AT4G28040"/>
</dbReference>
<dbReference type="Gramene" id="AT4G28040.5">
    <property type="protein sequence ID" value="AT4G28040.5"/>
    <property type="gene ID" value="AT4G28040"/>
</dbReference>
<dbReference type="KEGG" id="ath:AT4G28040"/>
<dbReference type="Araport" id="AT4G28040"/>
<dbReference type="TAIR" id="AT4G28040">
    <property type="gene designation" value="UMAMIT33"/>
</dbReference>
<dbReference type="eggNOG" id="ENOG502QTZ5">
    <property type="taxonomic scope" value="Eukaryota"/>
</dbReference>
<dbReference type="HOGENOM" id="CLU_025359_1_1_1"/>
<dbReference type="InParanoid" id="Q9SUD5"/>
<dbReference type="OMA" id="KYKPVMA"/>
<dbReference type="PhylomeDB" id="Q9SUD5"/>
<dbReference type="PRO" id="PR:Q9SUD5"/>
<dbReference type="Proteomes" id="UP000006548">
    <property type="component" value="Chromosome 4"/>
</dbReference>
<dbReference type="ExpressionAtlas" id="Q9SUD5">
    <property type="expression patterns" value="baseline and differential"/>
</dbReference>
<dbReference type="GO" id="GO:0016020">
    <property type="term" value="C:membrane"/>
    <property type="evidence" value="ECO:0007669"/>
    <property type="project" value="UniProtKB-SubCell"/>
</dbReference>
<dbReference type="GO" id="GO:0022857">
    <property type="term" value="F:transmembrane transporter activity"/>
    <property type="evidence" value="ECO:0007669"/>
    <property type="project" value="InterPro"/>
</dbReference>
<dbReference type="InterPro" id="IPR000620">
    <property type="entry name" value="EamA_dom"/>
</dbReference>
<dbReference type="InterPro" id="IPR030184">
    <property type="entry name" value="WAT1-related"/>
</dbReference>
<dbReference type="PANTHER" id="PTHR31218">
    <property type="entry name" value="WAT1-RELATED PROTEIN"/>
    <property type="match status" value="1"/>
</dbReference>
<dbReference type="Pfam" id="PF00892">
    <property type="entry name" value="EamA"/>
    <property type="match status" value="2"/>
</dbReference>
<dbReference type="SUPFAM" id="SSF103481">
    <property type="entry name" value="Multidrug resistance efflux transporter EmrE"/>
    <property type="match status" value="2"/>
</dbReference>
<protein>
    <recommendedName>
        <fullName>WAT1-related protein At4g28040</fullName>
    </recommendedName>
</protein>
<feature type="chain" id="PRO_0000421343" description="WAT1-related protein At4g28040">
    <location>
        <begin position="1"/>
        <end position="359"/>
    </location>
</feature>
<feature type="transmembrane region" description="Helical" evidence="2">
    <location>
        <begin position="10"/>
        <end position="30"/>
    </location>
</feature>
<feature type="transmembrane region" description="Helical" evidence="2">
    <location>
        <begin position="37"/>
        <end position="57"/>
    </location>
</feature>
<feature type="transmembrane region" description="Helical" evidence="2">
    <location>
        <begin position="66"/>
        <end position="86"/>
    </location>
</feature>
<feature type="transmembrane region" description="Helical" evidence="2">
    <location>
        <begin position="103"/>
        <end position="123"/>
    </location>
</feature>
<feature type="transmembrane region" description="Helical" evidence="2">
    <location>
        <begin position="133"/>
        <end position="153"/>
    </location>
</feature>
<feature type="transmembrane region" description="Helical" evidence="2">
    <location>
        <begin position="170"/>
        <end position="190"/>
    </location>
</feature>
<feature type="transmembrane region" description="Helical" evidence="2">
    <location>
        <begin position="204"/>
        <end position="224"/>
    </location>
</feature>
<feature type="transmembrane region" description="Helical" evidence="2">
    <location>
        <begin position="240"/>
        <end position="260"/>
    </location>
</feature>
<feature type="transmembrane region" description="Helical" evidence="2">
    <location>
        <begin position="266"/>
        <end position="286"/>
    </location>
</feature>
<feature type="transmembrane region" description="Helical" evidence="2">
    <location>
        <begin position="292"/>
        <end position="312"/>
    </location>
</feature>
<feature type="domain" description="EamA 1">
    <location>
        <begin position="18"/>
        <end position="131"/>
    </location>
</feature>
<feature type="domain" description="EamA 2">
    <location>
        <begin position="199"/>
        <end position="310"/>
    </location>
</feature>
<proteinExistence type="evidence at transcript level"/>
<gene>
    <name type="ordered locus">At4g28040</name>
    <name type="ORF">T13J8.150</name>
</gene>
<comment type="subcellular location">
    <subcellularLocation>
        <location evidence="1">Membrane</location>
        <topology evidence="3">Multi-pass membrane protein</topology>
    </subcellularLocation>
</comment>
<comment type="similarity">
    <text evidence="3">Belongs to the drug/metabolite transporter (DMT) superfamily. Plant drug/metabolite exporter (P-DME) (TC 2.A.7.4) family.</text>
</comment>